<protein>
    <recommendedName>
        <fullName>Assembly factor cbp4</fullName>
    </recommendedName>
    <alternativeName>
        <fullName>Cytochrome b mRNA-processing protein 4</fullName>
    </alternativeName>
</protein>
<feature type="chain" id="PRO_0000330121" description="Assembly factor cbp4">
    <location>
        <begin position="1"/>
        <end position="116"/>
    </location>
</feature>
<feature type="transmembrane region" description="Helical" evidence="2">
    <location>
        <begin position="7"/>
        <end position="25"/>
    </location>
</feature>
<feature type="region of interest" description="Disordered" evidence="3">
    <location>
        <begin position="86"/>
        <end position="116"/>
    </location>
</feature>
<feature type="coiled-coil region" evidence="2">
    <location>
        <begin position="77"/>
        <end position="112"/>
    </location>
</feature>
<accession>Q0CGN5</accession>
<reference key="1">
    <citation type="submission" date="2005-09" db="EMBL/GenBank/DDBJ databases">
        <title>Annotation of the Aspergillus terreus NIH2624 genome.</title>
        <authorList>
            <person name="Birren B.W."/>
            <person name="Lander E.S."/>
            <person name="Galagan J.E."/>
            <person name="Nusbaum C."/>
            <person name="Devon K."/>
            <person name="Henn M."/>
            <person name="Ma L.-J."/>
            <person name="Jaffe D.B."/>
            <person name="Butler J."/>
            <person name="Alvarez P."/>
            <person name="Gnerre S."/>
            <person name="Grabherr M."/>
            <person name="Kleber M."/>
            <person name="Mauceli E.W."/>
            <person name="Brockman W."/>
            <person name="Rounsley S."/>
            <person name="Young S.K."/>
            <person name="LaButti K."/>
            <person name="Pushparaj V."/>
            <person name="DeCaprio D."/>
            <person name="Crawford M."/>
            <person name="Koehrsen M."/>
            <person name="Engels R."/>
            <person name="Montgomery P."/>
            <person name="Pearson M."/>
            <person name="Howarth C."/>
            <person name="Larson L."/>
            <person name="Luoma S."/>
            <person name="White J."/>
            <person name="Alvarado L."/>
            <person name="Kodira C.D."/>
            <person name="Zeng Q."/>
            <person name="Oleary S."/>
            <person name="Yandava C."/>
            <person name="Denning D.W."/>
            <person name="Nierman W.C."/>
            <person name="Milne T."/>
            <person name="Madden K."/>
        </authorList>
    </citation>
    <scope>NUCLEOTIDE SEQUENCE [LARGE SCALE GENOMIC DNA]</scope>
    <source>
        <strain>NIH 2624 / FGSC A1156</strain>
    </source>
</reference>
<sequence length="116" mass="13519">MSRAGTWLKMLGAGIVICVGGPAFVQSIRPTDEELFKRYNPELQRRSLEEGDRRAQEFDDYVNRLKQWSKSDKSIWYAAQEQQEQKRSEAEALRNQAKDEARAQREEMRKELLGGK</sequence>
<name>CBP4_ASPTN</name>
<proteinExistence type="inferred from homology"/>
<keyword id="KW-0143">Chaperone</keyword>
<keyword id="KW-0175">Coiled coil</keyword>
<keyword id="KW-0472">Membrane</keyword>
<keyword id="KW-0496">Mitochondrion</keyword>
<keyword id="KW-0999">Mitochondrion inner membrane</keyword>
<keyword id="KW-1185">Reference proteome</keyword>
<keyword id="KW-0812">Transmembrane</keyword>
<keyword id="KW-1133">Transmembrane helix</keyword>
<comment type="function">
    <text evidence="1">Essential for the assembly of ubiquinol-cytochrome c reductase. It has a direct effect on the correct occurrence of the Rieske protein, core 4, core 5 and apocytochrome b (By similarity).</text>
</comment>
<comment type="subcellular location">
    <subcellularLocation>
        <location evidence="1">Mitochondrion inner membrane</location>
        <topology evidence="1">Single-pass membrane protein</topology>
    </subcellularLocation>
</comment>
<comment type="similarity">
    <text evidence="4">Belongs to the CBP4 family.</text>
</comment>
<gene>
    <name type="primary">cbp4</name>
    <name type="ORF">ATEG_07157</name>
</gene>
<evidence type="ECO:0000250" key="1"/>
<evidence type="ECO:0000255" key="2"/>
<evidence type="ECO:0000256" key="3">
    <source>
        <dbReference type="SAM" id="MobiDB-lite"/>
    </source>
</evidence>
<evidence type="ECO:0000305" key="4"/>
<organism>
    <name type="scientific">Aspergillus terreus (strain NIH 2624 / FGSC A1156)</name>
    <dbReference type="NCBI Taxonomy" id="341663"/>
    <lineage>
        <taxon>Eukaryota</taxon>
        <taxon>Fungi</taxon>
        <taxon>Dikarya</taxon>
        <taxon>Ascomycota</taxon>
        <taxon>Pezizomycotina</taxon>
        <taxon>Eurotiomycetes</taxon>
        <taxon>Eurotiomycetidae</taxon>
        <taxon>Eurotiales</taxon>
        <taxon>Aspergillaceae</taxon>
        <taxon>Aspergillus</taxon>
        <taxon>Aspergillus subgen. Circumdati</taxon>
    </lineage>
</organism>
<dbReference type="EMBL" id="CH476603">
    <property type="protein sequence ID" value="EAU32541.1"/>
    <property type="molecule type" value="Genomic_DNA"/>
</dbReference>
<dbReference type="RefSeq" id="XP_001209843.1">
    <property type="nucleotide sequence ID" value="XM_001209843.1"/>
</dbReference>
<dbReference type="EnsemblFungi" id="EAU32541">
    <property type="protein sequence ID" value="EAU32541"/>
    <property type="gene ID" value="ATEG_07157"/>
</dbReference>
<dbReference type="GeneID" id="4318992"/>
<dbReference type="VEuPathDB" id="FungiDB:ATEG_07157"/>
<dbReference type="eggNOG" id="ENOG502S2G8">
    <property type="taxonomic scope" value="Eukaryota"/>
</dbReference>
<dbReference type="HOGENOM" id="CLU_136894_0_0_1"/>
<dbReference type="OMA" id="DKPIWVV"/>
<dbReference type="OrthoDB" id="5576752at2759"/>
<dbReference type="Proteomes" id="UP000007963">
    <property type="component" value="Unassembled WGS sequence"/>
</dbReference>
<dbReference type="GO" id="GO:0005743">
    <property type="term" value="C:mitochondrial inner membrane"/>
    <property type="evidence" value="ECO:0007669"/>
    <property type="project" value="UniProtKB-SubCell"/>
</dbReference>
<dbReference type="GO" id="GO:0034551">
    <property type="term" value="P:mitochondrial respiratory chain complex III assembly"/>
    <property type="evidence" value="ECO:0007669"/>
    <property type="project" value="TreeGrafter"/>
</dbReference>
<dbReference type="InterPro" id="IPR012420">
    <property type="entry name" value="Cbp4"/>
</dbReference>
<dbReference type="PANTHER" id="PTHR28202">
    <property type="entry name" value="ASSEMBLY FACTOR CBP4"/>
    <property type="match status" value="1"/>
</dbReference>
<dbReference type="PANTHER" id="PTHR28202:SF1">
    <property type="entry name" value="ASSEMBLY FACTOR CBP4"/>
    <property type="match status" value="1"/>
</dbReference>
<dbReference type="Pfam" id="PF07960">
    <property type="entry name" value="CBP4"/>
    <property type="match status" value="1"/>
</dbReference>